<protein>
    <recommendedName>
        <fullName>Metallothionein</fullName>
        <shortName>MT</shortName>
    </recommendedName>
</protein>
<evidence type="ECO:0000269" key="1">
    <source>
    </source>
</evidence>
<evidence type="ECO:0000305" key="2"/>
<evidence type="ECO:0007744" key="3">
    <source>
        <dbReference type="PDB" id="1JJD"/>
    </source>
</evidence>
<evidence type="ECO:0007829" key="4">
    <source>
        <dbReference type="PDB" id="1JJD"/>
    </source>
</evidence>
<reference key="1">
    <citation type="journal article" date="1993" name="Mol. Microbiol.">
        <title>Isolation of a prokaryotic metallothionein locus and analysis of transcriptional control by trace metal ions.</title>
        <authorList>
            <person name="Huckle J.W."/>
            <person name="Morby A.P."/>
            <person name="Turner J.S."/>
            <person name="Robinson N.J."/>
        </authorList>
    </citation>
    <scope>NUCLEOTIDE SEQUENCE [GENOMIC DNA]</scope>
</reference>
<reference key="2">
    <citation type="journal article" date="1992" name="FEBS Lett.">
        <title>Cyanobacterial metallothionein gene expressed in Escherichia coli. Metal-binding properties of the expressed protein.</title>
        <authorList>
            <person name="Shi J."/>
            <person name="Lindsay W.P."/>
            <person name="Huckle J.W."/>
            <person name="Morby A.P."/>
            <person name="Robinson N.J."/>
        </authorList>
    </citation>
    <scope>NUCLEOTIDE SEQUENCE [GENOMIC DNA]</scope>
    <scope>PARTIAL PROTEIN SEQUENCE</scope>
    <scope>CHARACTERIZATION</scope>
</reference>
<reference key="3">
    <citation type="submission" date="2005-08" db="EMBL/GenBank/DDBJ databases">
        <title>Complete sequence of chromosome 1 of Synechococcus elongatus PCC 7942.</title>
        <authorList>
            <consortium name="US DOE Joint Genome Institute"/>
            <person name="Copeland A."/>
            <person name="Lucas S."/>
            <person name="Lapidus A."/>
            <person name="Barry K."/>
            <person name="Detter J.C."/>
            <person name="Glavina T."/>
            <person name="Hammon N."/>
            <person name="Israni S."/>
            <person name="Pitluck S."/>
            <person name="Schmutz J."/>
            <person name="Larimer F."/>
            <person name="Land M."/>
            <person name="Kyrpides N."/>
            <person name="Lykidis A."/>
            <person name="Golden S."/>
            <person name="Richardson P."/>
        </authorList>
    </citation>
    <scope>NUCLEOTIDE SEQUENCE [LARGE SCALE GENOMIC DNA]</scope>
    <source>
        <strain>ATCC 33912 / PCC 7942 / FACHB-805</strain>
    </source>
</reference>
<reference evidence="3" key="4">
    <citation type="journal article" date="2001" name="Proc. Natl. Acad. Sci. U.S.A.">
        <title>A metallothionein containing a zinc finger within a four-metal cluster protects a bacterium from zinc toxicity.</title>
        <authorList>
            <person name="Blindauer C.A."/>
            <person name="Harrison M.D."/>
            <person name="Parkinson J.A."/>
            <person name="Robinson A.K."/>
            <person name="Cavet J.S."/>
            <person name="Robinson N.J."/>
            <person name="Sadler P.J."/>
        </authorList>
    </citation>
    <scope>STRUCTURE BY NMR OF 2-56 IN COMPLEX WITH ZINC</scope>
</reference>
<feature type="initiator methionine" description="Removed">
    <location>
        <position position="1"/>
    </location>
</feature>
<feature type="chain" id="PRO_0000197371" description="Metallothionein">
    <location>
        <begin position="2"/>
        <end position="56"/>
    </location>
</feature>
<feature type="binding site" evidence="1 3">
    <location>
        <position position="9"/>
    </location>
    <ligand>
        <name>Zn(2+)</name>
        <dbReference type="ChEBI" id="CHEBI:29105"/>
        <label>1</label>
    </ligand>
</feature>
<feature type="binding site" evidence="1 3">
    <location>
        <position position="11"/>
    </location>
    <ligand>
        <name>Zn(2+)</name>
        <dbReference type="ChEBI" id="CHEBI:29105"/>
        <label>2</label>
    </ligand>
</feature>
<feature type="binding site" evidence="1 3">
    <location>
        <position position="14"/>
    </location>
    <ligand>
        <name>Zn(2+)</name>
        <dbReference type="ChEBI" id="CHEBI:29105"/>
        <label>1</label>
    </ligand>
</feature>
<feature type="binding site" evidence="1 3">
    <location>
        <position position="14"/>
    </location>
    <ligand>
        <name>Zn(2+)</name>
        <dbReference type="ChEBI" id="CHEBI:29105"/>
        <label>3</label>
    </ligand>
</feature>
<feature type="binding site" evidence="1 3">
    <location>
        <position position="16"/>
    </location>
    <ligand>
        <name>Zn(2+)</name>
        <dbReference type="ChEBI" id="CHEBI:29105"/>
        <label>4</label>
    </ligand>
</feature>
<feature type="binding site" evidence="1 3">
    <location>
        <position position="32"/>
    </location>
    <ligand>
        <name>Zn(2+)</name>
        <dbReference type="ChEBI" id="CHEBI:29105"/>
        <label>1</label>
    </ligand>
</feature>
<feature type="binding site" evidence="1 3">
    <location>
        <position position="32"/>
    </location>
    <ligand>
        <name>Zn(2+)</name>
        <dbReference type="ChEBI" id="CHEBI:29105"/>
        <label>4</label>
    </ligand>
</feature>
<feature type="binding site" evidence="1 3">
    <location>
        <position position="36"/>
    </location>
    <ligand>
        <name>Zn(2+)</name>
        <dbReference type="ChEBI" id="CHEBI:29105"/>
        <label>1</label>
    </ligand>
</feature>
<feature type="binding site" evidence="1 3">
    <location>
        <position position="36"/>
    </location>
    <ligand>
        <name>Zn(2+)</name>
        <dbReference type="ChEBI" id="CHEBI:29105"/>
        <label>2</label>
    </ligand>
</feature>
<feature type="binding site" evidence="1 3">
    <location>
        <position position="40"/>
    </location>
    <ligand>
        <name>Zn(2+)</name>
        <dbReference type="ChEBI" id="CHEBI:29105"/>
        <label>2</label>
    </ligand>
</feature>
<feature type="binding site" evidence="1 3">
    <location>
        <position position="47"/>
    </location>
    <ligand>
        <name>Zn(2+)</name>
        <dbReference type="ChEBI" id="CHEBI:29105"/>
        <label>3</label>
    </ligand>
</feature>
<feature type="binding site" evidence="1 3">
    <location>
        <position position="47"/>
    </location>
    <ligand>
        <name>Zn(2+)</name>
        <dbReference type="ChEBI" id="CHEBI:29105"/>
        <label>4</label>
    </ligand>
</feature>
<feature type="binding site" evidence="1 3">
    <location>
        <position position="49"/>
    </location>
    <ligand>
        <name>Zn(2+)</name>
        <dbReference type="ChEBI" id="CHEBI:29105"/>
        <label>4</label>
    </ligand>
</feature>
<feature type="binding site" evidence="1 3">
    <location>
        <position position="52"/>
    </location>
    <ligand>
        <name>Zn(2+)</name>
        <dbReference type="ChEBI" id="CHEBI:29105"/>
        <label>3</label>
    </ligand>
</feature>
<feature type="binding site" evidence="1 3">
    <location>
        <position position="54"/>
    </location>
    <ligand>
        <name>Zn(2+)</name>
        <dbReference type="ChEBI" id="CHEBI:29105"/>
        <label>2</label>
    </ligand>
</feature>
<feature type="binding site" evidence="1 3">
    <location>
        <position position="54"/>
    </location>
    <ligand>
        <name>Zn(2+)</name>
        <dbReference type="ChEBI" id="CHEBI:29105"/>
        <label>3</label>
    </ligand>
</feature>
<feature type="turn" evidence="4">
    <location>
        <begin position="20"/>
        <end position="22"/>
    </location>
</feature>
<feature type="strand" evidence="4">
    <location>
        <begin position="23"/>
        <end position="28"/>
    </location>
</feature>
<feature type="strand" evidence="4">
    <location>
        <begin position="30"/>
        <end position="33"/>
    </location>
</feature>
<feature type="helix" evidence="4">
    <location>
        <begin position="34"/>
        <end position="38"/>
    </location>
</feature>
<proteinExistence type="evidence at protein level"/>
<name>MT_SYNE7</name>
<gene>
    <name type="primary">smtA</name>
    <name type="ordered locus">Synpcc7942_1290</name>
</gene>
<keyword id="KW-0002">3D-structure</keyword>
<keyword id="KW-0104">Cadmium</keyword>
<keyword id="KW-0186">Copper</keyword>
<keyword id="KW-0903">Direct protein sequencing</keyword>
<keyword id="KW-0476">Mercury</keyword>
<keyword id="KW-0479">Metal-binding</keyword>
<keyword id="KW-0480">Metal-thiolate cluster</keyword>
<keyword id="KW-1185">Reference proteome</keyword>
<keyword id="KW-0862">Zinc</keyword>
<organism>
    <name type="scientific">Synechococcus elongatus (strain ATCC 33912 / PCC 7942 / FACHB-805)</name>
    <name type="common">Anacystis nidulans R2</name>
    <dbReference type="NCBI Taxonomy" id="1140"/>
    <lineage>
        <taxon>Bacteria</taxon>
        <taxon>Bacillati</taxon>
        <taxon>Cyanobacteriota</taxon>
        <taxon>Cyanophyceae</taxon>
        <taxon>Synechococcales</taxon>
        <taxon>Synechococcaceae</taxon>
        <taxon>Synechococcus</taxon>
    </lineage>
</organism>
<accession>P30331</accession>
<accession>Q31NP9</accession>
<dbReference type="EMBL" id="X64585">
    <property type="protein sequence ID" value="CAA45873.1"/>
    <property type="molecule type" value="Genomic_DNA"/>
</dbReference>
<dbReference type="EMBL" id="CP000100">
    <property type="protein sequence ID" value="ABB57320.1"/>
    <property type="molecule type" value="Genomic_DNA"/>
</dbReference>
<dbReference type="PIR" id="S31198">
    <property type="entry name" value="S31198"/>
</dbReference>
<dbReference type="RefSeq" id="WP_011377964.1">
    <property type="nucleotide sequence ID" value="NZ_JACJTX010000003.1"/>
</dbReference>
<dbReference type="PDB" id="1JJD">
    <property type="method" value="NMR"/>
    <property type="chains" value="A=2-56"/>
</dbReference>
<dbReference type="PDBsum" id="1JJD"/>
<dbReference type="SMR" id="P30331"/>
<dbReference type="STRING" id="1140.Synpcc7942_1290"/>
<dbReference type="PaxDb" id="1140-Synpcc7942_1290"/>
<dbReference type="KEGG" id="syf:Synpcc7942_1290"/>
<dbReference type="eggNOG" id="ENOG50330JR">
    <property type="taxonomic scope" value="Bacteria"/>
</dbReference>
<dbReference type="HOGENOM" id="CLU_192999_1_0_3"/>
<dbReference type="OrthoDB" id="468089at2"/>
<dbReference type="BioCyc" id="SYNEL:SYNPCC7942_1290-MONOMER"/>
<dbReference type="EvolutionaryTrace" id="P30331"/>
<dbReference type="Proteomes" id="UP000889800">
    <property type="component" value="Chromosome"/>
</dbReference>
<dbReference type="GO" id="GO:0046872">
    <property type="term" value="F:metal ion binding"/>
    <property type="evidence" value="ECO:0007669"/>
    <property type="project" value="UniProtKB-KW"/>
</dbReference>
<dbReference type="Gene3D" id="2.30.170.10">
    <property type="match status" value="1"/>
</dbReference>
<dbReference type="InterPro" id="IPR017854">
    <property type="entry name" value="Metalthion_dom_sf"/>
</dbReference>
<dbReference type="InterPro" id="IPR000518">
    <property type="entry name" value="Metalthion_fam14_prok"/>
</dbReference>
<dbReference type="Pfam" id="PF02069">
    <property type="entry name" value="Metallothio_Pro"/>
    <property type="match status" value="1"/>
</dbReference>
<dbReference type="PRINTS" id="PR00859">
    <property type="entry name" value="MTPROKARYOTE"/>
</dbReference>
<dbReference type="SUPFAM" id="SSF57868">
    <property type="entry name" value="Metallothionein"/>
    <property type="match status" value="1"/>
</dbReference>
<sequence>MTSTTLVKCACEPCLCNVDPSKAIDRNGLYYCSEACADGHTGGSKGCGHTGCNCHG</sequence>
<comment type="function">
    <text evidence="1">May play a role in essential metal ion homeostasis (especially zinc homeostasis) and resistance to certain non-essential metal ions. Binds four zinc ions (PubMed:11493688).</text>
</comment>
<comment type="induction">
    <text>Upon exposure to a range of metals, particularly cadmium, zinc, copper and mercury.</text>
</comment>
<comment type="similarity">
    <text evidence="2">Belongs to the metallothionein superfamily. Type 14 family.</text>
</comment>